<gene>
    <name evidence="1" type="primary">lamB</name>
    <name type="ordered locus">Ecok1_40100</name>
    <name type="ORF">APECO1_2432</name>
</gene>
<name>LAMB_ECOK1</name>
<evidence type="ECO:0000255" key="1">
    <source>
        <dbReference type="HAMAP-Rule" id="MF_01301"/>
    </source>
</evidence>
<proteinExistence type="inferred from homology"/>
<feature type="signal peptide" evidence="1">
    <location>
        <begin position="1"/>
        <end position="25"/>
    </location>
</feature>
<feature type="chain" id="PRO_0000290218" description="Maltoporin">
    <location>
        <begin position="26"/>
        <end position="446"/>
    </location>
</feature>
<feature type="site" description="Greasy slide, important in sugar transport" evidence="1">
    <location>
        <position position="31"/>
    </location>
</feature>
<feature type="site" description="Greasy slide, important in sugar transport" evidence="1">
    <location>
        <position position="66"/>
    </location>
</feature>
<feature type="site" description="Greasy slide, important in sugar transport" evidence="1">
    <location>
        <position position="99"/>
    </location>
</feature>
<feature type="site" description="Important in sugar transport" evidence="1">
    <location>
        <position position="143"/>
    </location>
</feature>
<feature type="site" description="Greasy slide, important in sugar transport" evidence="1">
    <location>
        <position position="252"/>
    </location>
</feature>
<feature type="site" description="Greasy slide, important in sugar transport" evidence="1">
    <location>
        <position position="383"/>
    </location>
</feature>
<feature type="site" description="Greasy slide, important in sugar transport" evidence="1">
    <location>
        <position position="445"/>
    </location>
</feature>
<keyword id="KW-0998">Cell outer membrane</keyword>
<keyword id="KW-0406">Ion transport</keyword>
<keyword id="KW-0472">Membrane</keyword>
<keyword id="KW-0626">Porin</keyword>
<keyword id="KW-1185">Reference proteome</keyword>
<keyword id="KW-0732">Signal</keyword>
<keyword id="KW-0762">Sugar transport</keyword>
<keyword id="KW-0812">Transmembrane</keyword>
<keyword id="KW-1134">Transmembrane beta strand</keyword>
<keyword id="KW-0813">Transport</keyword>
<protein>
    <recommendedName>
        <fullName evidence="1">Maltoporin</fullName>
    </recommendedName>
    <alternativeName>
        <fullName evidence="1">Maltose-inducible porin</fullName>
    </alternativeName>
</protein>
<organism>
    <name type="scientific">Escherichia coli O1:K1 / APEC</name>
    <dbReference type="NCBI Taxonomy" id="405955"/>
    <lineage>
        <taxon>Bacteria</taxon>
        <taxon>Pseudomonadati</taxon>
        <taxon>Pseudomonadota</taxon>
        <taxon>Gammaproteobacteria</taxon>
        <taxon>Enterobacterales</taxon>
        <taxon>Enterobacteriaceae</taxon>
        <taxon>Escherichia</taxon>
    </lineage>
</organism>
<reference key="1">
    <citation type="journal article" date="2007" name="J. Bacteriol.">
        <title>The genome sequence of avian pathogenic Escherichia coli strain O1:K1:H7 shares strong similarities with human extraintestinal pathogenic E. coli genomes.</title>
        <authorList>
            <person name="Johnson T.J."/>
            <person name="Kariyawasam S."/>
            <person name="Wannemuehler Y."/>
            <person name="Mangiamele P."/>
            <person name="Johnson S.J."/>
            <person name="Doetkott C."/>
            <person name="Skyberg J.A."/>
            <person name="Lynne A.M."/>
            <person name="Johnson J.R."/>
            <person name="Nolan L.K."/>
        </authorList>
    </citation>
    <scope>NUCLEOTIDE SEQUENCE [LARGE SCALE GENOMIC DNA]</scope>
</reference>
<accession>A1AIL4</accession>
<comment type="function">
    <text evidence="1">Involved in the transport of maltose and maltodextrins.</text>
</comment>
<comment type="catalytic activity">
    <reaction evidence="1">
        <text>beta-maltose(in) = beta-maltose(out)</text>
        <dbReference type="Rhea" id="RHEA:29731"/>
        <dbReference type="ChEBI" id="CHEBI:18147"/>
    </reaction>
</comment>
<comment type="subunit">
    <text evidence="1">Homotrimer formed of three 18-stranded antiparallel beta-barrels, containing three independent channels.</text>
</comment>
<comment type="subcellular location">
    <subcellularLocation>
        <location evidence="1">Cell outer membrane</location>
        <topology evidence="1">Multi-pass membrane protein</topology>
    </subcellularLocation>
</comment>
<comment type="induction">
    <text evidence="1">By maltose.</text>
</comment>
<comment type="similarity">
    <text evidence="1">Belongs to the porin LamB (TC 1.B.3) family.</text>
</comment>
<sequence length="446" mass="49941">MMITLRKLPLAVAVAAGVMSAQAMAVDFHGYARSGIGWTGSGGEQQCFQTTGAQSKYRLGNECETYAELKLGQEVWKEGDKSFYFDTNVAYSVAQQNDWEATDPAFREANVQGKNLIEWLPGSTIWAGKRFYQRHDVHMIDFYYWDISGPGAGLENIDVGFGKLSLAATRSSEAGGSSSFASNNIYDYTNETANDVFDVRLAQMEINPGGTLELGVDYGRANLRDNYRLVDGASKDGWLFTAEHTQSVLKGFNKFVVQYATDSMTSQGKGLSQGSGVAFDNEKFAYNINNNGHMLRILDHGAISMGDNWDMMYVGMYQDINWDNDNGTKWWTVGIRPMYKWTPIMSTVMEIGYDNVESQRTGDKNNQYKITLAQQWQAGDSIWSRPAIRVFATYAKWDEKWGYDYTGSSSTNPYYGKAVSADFNGGSFGRGDSDEWTFGAQMEIWW</sequence>
<dbReference type="EMBL" id="CP000468">
    <property type="protein sequence ID" value="ABJ03504.1"/>
    <property type="molecule type" value="Genomic_DNA"/>
</dbReference>
<dbReference type="RefSeq" id="WP_000973666.1">
    <property type="nucleotide sequence ID" value="NZ_CADILS010000008.1"/>
</dbReference>
<dbReference type="BMRB" id="A1AIL4"/>
<dbReference type="SMR" id="A1AIL4"/>
<dbReference type="KEGG" id="ecv:APECO1_2432"/>
<dbReference type="HOGENOM" id="CLU_032473_4_1_6"/>
<dbReference type="Proteomes" id="UP000008216">
    <property type="component" value="Chromosome"/>
</dbReference>
<dbReference type="GO" id="GO:0009279">
    <property type="term" value="C:cell outer membrane"/>
    <property type="evidence" value="ECO:0007669"/>
    <property type="project" value="UniProtKB-SubCell"/>
</dbReference>
<dbReference type="GO" id="GO:0046930">
    <property type="term" value="C:pore complex"/>
    <property type="evidence" value="ECO:0007669"/>
    <property type="project" value="UniProtKB-KW"/>
</dbReference>
<dbReference type="GO" id="GO:0042958">
    <property type="term" value="F:maltodextrin transmembrane transporter activity"/>
    <property type="evidence" value="ECO:0007669"/>
    <property type="project" value="InterPro"/>
</dbReference>
<dbReference type="GO" id="GO:0015481">
    <property type="term" value="F:maltose transporting porin activity"/>
    <property type="evidence" value="ECO:0007669"/>
    <property type="project" value="InterPro"/>
</dbReference>
<dbReference type="GO" id="GO:0006811">
    <property type="term" value="P:monoatomic ion transport"/>
    <property type="evidence" value="ECO:0007669"/>
    <property type="project" value="UniProtKB-KW"/>
</dbReference>
<dbReference type="CDD" id="cd01346">
    <property type="entry name" value="Maltoporin-like"/>
    <property type="match status" value="1"/>
</dbReference>
<dbReference type="FunFam" id="2.40.170.10:FF:000001">
    <property type="entry name" value="Maltoporin"/>
    <property type="match status" value="1"/>
</dbReference>
<dbReference type="Gene3D" id="2.40.170.10">
    <property type="entry name" value="Porin, LamB type"/>
    <property type="match status" value="1"/>
</dbReference>
<dbReference type="HAMAP" id="MF_01301">
    <property type="entry name" value="LamB"/>
    <property type="match status" value="1"/>
</dbReference>
<dbReference type="InterPro" id="IPR050286">
    <property type="entry name" value="G_neg_Bact_CarbUptk_Porin"/>
</dbReference>
<dbReference type="InterPro" id="IPR023738">
    <property type="entry name" value="Maltoporin"/>
</dbReference>
<dbReference type="InterPro" id="IPR003192">
    <property type="entry name" value="Porin_LamB"/>
</dbReference>
<dbReference type="InterPro" id="IPR036998">
    <property type="entry name" value="Porin_LamB_sf"/>
</dbReference>
<dbReference type="NCBIfam" id="NF006860">
    <property type="entry name" value="PRK09360.1"/>
    <property type="match status" value="1"/>
</dbReference>
<dbReference type="PANTHER" id="PTHR38762">
    <property type="entry name" value="CRYPTIC OUTER MEMBRANE PORIN BGLH-RELATED"/>
    <property type="match status" value="1"/>
</dbReference>
<dbReference type="PANTHER" id="PTHR38762:SF1">
    <property type="entry name" value="CRYPTIC OUTER MEMBRANE PORIN BGLH-RELATED"/>
    <property type="match status" value="1"/>
</dbReference>
<dbReference type="Pfam" id="PF02264">
    <property type="entry name" value="LamB"/>
    <property type="match status" value="1"/>
</dbReference>
<dbReference type="SUPFAM" id="SSF56935">
    <property type="entry name" value="Porins"/>
    <property type="match status" value="1"/>
</dbReference>